<evidence type="ECO:0000255" key="1">
    <source>
        <dbReference type="HAMAP-Rule" id="MF_00051"/>
    </source>
</evidence>
<evidence type="ECO:0000305" key="2"/>
<name>GLYA2_MYCTO</name>
<keyword id="KW-0028">Amino-acid biosynthesis</keyword>
<keyword id="KW-0963">Cytoplasm</keyword>
<keyword id="KW-0554">One-carbon metabolism</keyword>
<keyword id="KW-0663">Pyridoxal phosphate</keyword>
<keyword id="KW-1185">Reference proteome</keyword>
<keyword id="KW-0808">Transferase</keyword>
<accession>P9WGI6</accession>
<accession>L0T483</accession>
<accession>O53615</accession>
<comment type="function">
    <text evidence="1">Catalyzes the reversible interconversion of serine and glycine with tetrahydrofolate (THF) serving as the one-carbon carrier. This reaction serves as the major source of one-carbon groups required for the biosynthesis of purines, thymidylate, methionine, and other important biomolecules. Also exhibits THF-independent aldolase activity toward beta-hydroxyamino acids, producing glycine and aldehydes, via a retro-aldol mechanism.</text>
</comment>
<comment type="catalytic activity">
    <reaction evidence="1">
        <text>(6R)-5,10-methylene-5,6,7,8-tetrahydrofolate + glycine + H2O = (6S)-5,6,7,8-tetrahydrofolate + L-serine</text>
        <dbReference type="Rhea" id="RHEA:15481"/>
        <dbReference type="ChEBI" id="CHEBI:15377"/>
        <dbReference type="ChEBI" id="CHEBI:15636"/>
        <dbReference type="ChEBI" id="CHEBI:33384"/>
        <dbReference type="ChEBI" id="CHEBI:57305"/>
        <dbReference type="ChEBI" id="CHEBI:57453"/>
        <dbReference type="EC" id="2.1.2.1"/>
    </reaction>
</comment>
<comment type="cofactor">
    <cofactor evidence="1">
        <name>pyridoxal 5'-phosphate</name>
        <dbReference type="ChEBI" id="CHEBI:597326"/>
    </cofactor>
</comment>
<comment type="pathway">
    <text evidence="1">One-carbon metabolism; tetrahydrofolate interconversion.</text>
</comment>
<comment type="pathway">
    <text evidence="1">Amino-acid biosynthesis; glycine biosynthesis; glycine from L-serine: step 1/1.</text>
</comment>
<comment type="subunit">
    <text evidence="1">Homodimer.</text>
</comment>
<comment type="subcellular location">
    <subcellularLocation>
        <location evidence="1">Cytoplasm</location>
    </subcellularLocation>
</comment>
<comment type="similarity">
    <text evidence="1 2">Belongs to the SHMT family.</text>
</comment>
<dbReference type="EC" id="2.1.2.1" evidence="1"/>
<dbReference type="EMBL" id="AE000516">
    <property type="protein sequence ID" value="AAK44300.1"/>
    <property type="molecule type" value="Genomic_DNA"/>
</dbReference>
<dbReference type="PIR" id="G70848">
    <property type="entry name" value="G70848"/>
</dbReference>
<dbReference type="SMR" id="P9WGI6"/>
<dbReference type="KEGG" id="mtc:MT0076"/>
<dbReference type="PATRIC" id="fig|83331.31.peg.79"/>
<dbReference type="HOGENOM" id="CLU_022477_2_0_11"/>
<dbReference type="UniPathway" id="UPA00193"/>
<dbReference type="UniPathway" id="UPA00288">
    <property type="reaction ID" value="UER01023"/>
</dbReference>
<dbReference type="Proteomes" id="UP000001020">
    <property type="component" value="Chromosome"/>
</dbReference>
<dbReference type="GO" id="GO:0005829">
    <property type="term" value="C:cytosol"/>
    <property type="evidence" value="ECO:0007669"/>
    <property type="project" value="TreeGrafter"/>
</dbReference>
<dbReference type="GO" id="GO:0004372">
    <property type="term" value="F:glycine hydroxymethyltransferase activity"/>
    <property type="evidence" value="ECO:0007669"/>
    <property type="project" value="UniProtKB-UniRule"/>
</dbReference>
<dbReference type="GO" id="GO:0030170">
    <property type="term" value="F:pyridoxal phosphate binding"/>
    <property type="evidence" value="ECO:0007669"/>
    <property type="project" value="UniProtKB-UniRule"/>
</dbReference>
<dbReference type="GO" id="GO:0019264">
    <property type="term" value="P:glycine biosynthetic process from serine"/>
    <property type="evidence" value="ECO:0007669"/>
    <property type="project" value="UniProtKB-UniRule"/>
</dbReference>
<dbReference type="GO" id="GO:0035999">
    <property type="term" value="P:tetrahydrofolate interconversion"/>
    <property type="evidence" value="ECO:0007669"/>
    <property type="project" value="UniProtKB-UniRule"/>
</dbReference>
<dbReference type="CDD" id="cd00378">
    <property type="entry name" value="SHMT"/>
    <property type="match status" value="1"/>
</dbReference>
<dbReference type="FunFam" id="3.40.640.10:FF:000001">
    <property type="entry name" value="Serine hydroxymethyltransferase"/>
    <property type="match status" value="1"/>
</dbReference>
<dbReference type="Gene3D" id="3.90.1150.10">
    <property type="entry name" value="Aspartate Aminotransferase, domain 1"/>
    <property type="match status" value="1"/>
</dbReference>
<dbReference type="Gene3D" id="3.40.640.10">
    <property type="entry name" value="Type I PLP-dependent aspartate aminotransferase-like (Major domain)"/>
    <property type="match status" value="1"/>
</dbReference>
<dbReference type="HAMAP" id="MF_00051">
    <property type="entry name" value="SHMT"/>
    <property type="match status" value="1"/>
</dbReference>
<dbReference type="InterPro" id="IPR015424">
    <property type="entry name" value="PyrdxlP-dep_Trfase"/>
</dbReference>
<dbReference type="InterPro" id="IPR015421">
    <property type="entry name" value="PyrdxlP-dep_Trfase_major"/>
</dbReference>
<dbReference type="InterPro" id="IPR015422">
    <property type="entry name" value="PyrdxlP-dep_Trfase_small"/>
</dbReference>
<dbReference type="InterPro" id="IPR001085">
    <property type="entry name" value="Ser_HO-MeTrfase"/>
</dbReference>
<dbReference type="InterPro" id="IPR049943">
    <property type="entry name" value="Ser_HO-MeTrfase-like"/>
</dbReference>
<dbReference type="InterPro" id="IPR019798">
    <property type="entry name" value="Ser_HO-MeTrfase_PLP_BS"/>
</dbReference>
<dbReference type="InterPro" id="IPR039429">
    <property type="entry name" value="SHMT-like_dom"/>
</dbReference>
<dbReference type="NCBIfam" id="NF000586">
    <property type="entry name" value="PRK00011.1"/>
    <property type="match status" value="1"/>
</dbReference>
<dbReference type="PANTHER" id="PTHR11680">
    <property type="entry name" value="SERINE HYDROXYMETHYLTRANSFERASE"/>
    <property type="match status" value="1"/>
</dbReference>
<dbReference type="PANTHER" id="PTHR11680:SF35">
    <property type="entry name" value="SERINE HYDROXYMETHYLTRANSFERASE 1"/>
    <property type="match status" value="1"/>
</dbReference>
<dbReference type="Pfam" id="PF00464">
    <property type="entry name" value="SHMT"/>
    <property type="match status" value="1"/>
</dbReference>
<dbReference type="PIRSF" id="PIRSF000412">
    <property type="entry name" value="SHMT"/>
    <property type="match status" value="1"/>
</dbReference>
<dbReference type="SUPFAM" id="SSF53383">
    <property type="entry name" value="PLP-dependent transferases"/>
    <property type="match status" value="1"/>
</dbReference>
<dbReference type="PROSITE" id="PS00096">
    <property type="entry name" value="SHMT"/>
    <property type="match status" value="1"/>
</dbReference>
<organism>
    <name type="scientific">Mycobacterium tuberculosis (strain CDC 1551 / Oshkosh)</name>
    <dbReference type="NCBI Taxonomy" id="83331"/>
    <lineage>
        <taxon>Bacteria</taxon>
        <taxon>Bacillati</taxon>
        <taxon>Actinomycetota</taxon>
        <taxon>Actinomycetes</taxon>
        <taxon>Mycobacteriales</taxon>
        <taxon>Mycobacteriaceae</taxon>
        <taxon>Mycobacterium</taxon>
        <taxon>Mycobacterium tuberculosis complex</taxon>
    </lineage>
</organism>
<sequence length="425" mass="45526">MNTLNDSLTAFDPDIAALIDGELRRQESGLEMIASENYAPLAVMQAQGSVLTNKYAEGYPGRRYYGGCEFVDGVEQLAIDRVKALFGAEYANVQPHSGATANAATMHALLNPGDTILGLSLAHGGHLTHGMRINFSGKLYHATAYEVSKEDYLVDMDAVAEAARTHRPKMIIAGWSAYPRQLDFARFRAIADEVDAVLMVDMAHFAGLVAAGVHPSPVPHAHVVTSTTHKTLGGPRGGIILCNDPAIAKKINSAVFPGQQGGPLEHVIAAKATAFKMAAQPEFAQRQQRCLDGARILAGRLTQPDVAERGIAVLTGGTDVHLVLVDLRDAELDGQQAEDRLAAVDITVNRNAVPFDPRPPMITSGLRIGTPALAARGFSHNDFRAVADLIAAALTATNDDQLGPLRAQVQRLAARYPLYPELHRT</sequence>
<feature type="chain" id="PRO_0000428355" description="Serine hydroxymethyltransferase 2">
    <location>
        <begin position="1"/>
        <end position="425"/>
    </location>
</feature>
<feature type="binding site" evidence="1">
    <location>
        <position position="121"/>
    </location>
    <ligand>
        <name>(6S)-5,6,7,8-tetrahydrofolate</name>
        <dbReference type="ChEBI" id="CHEBI:57453"/>
    </ligand>
</feature>
<feature type="binding site" evidence="1">
    <location>
        <begin position="125"/>
        <end position="127"/>
    </location>
    <ligand>
        <name>(6S)-5,6,7,8-tetrahydrofolate</name>
        <dbReference type="ChEBI" id="CHEBI:57453"/>
    </ligand>
</feature>
<feature type="site" description="Plays an important role in substrate specificity" evidence="1">
    <location>
        <position position="229"/>
    </location>
</feature>
<feature type="modified residue" description="N6-(pyridoxal phosphate)lysine" evidence="1">
    <location>
        <position position="230"/>
    </location>
</feature>
<reference key="1">
    <citation type="journal article" date="2002" name="J. Bacteriol.">
        <title>Whole-genome comparison of Mycobacterium tuberculosis clinical and laboratory strains.</title>
        <authorList>
            <person name="Fleischmann R.D."/>
            <person name="Alland D."/>
            <person name="Eisen J.A."/>
            <person name="Carpenter L."/>
            <person name="White O."/>
            <person name="Peterson J.D."/>
            <person name="DeBoy R.T."/>
            <person name="Dodson R.J."/>
            <person name="Gwinn M.L."/>
            <person name="Haft D.H."/>
            <person name="Hickey E.K."/>
            <person name="Kolonay J.F."/>
            <person name="Nelson W.C."/>
            <person name="Umayam L.A."/>
            <person name="Ermolaeva M.D."/>
            <person name="Salzberg S.L."/>
            <person name="Delcher A."/>
            <person name="Utterback T.R."/>
            <person name="Weidman J.F."/>
            <person name="Khouri H.M."/>
            <person name="Gill J."/>
            <person name="Mikula A."/>
            <person name="Bishai W."/>
            <person name="Jacobs W.R. Jr."/>
            <person name="Venter J.C."/>
            <person name="Fraser C.M."/>
        </authorList>
    </citation>
    <scope>NUCLEOTIDE SEQUENCE [LARGE SCALE GENOMIC DNA]</scope>
    <source>
        <strain>CDC 1551 / Oshkosh</strain>
    </source>
</reference>
<gene>
    <name evidence="1" type="primary">glyA2</name>
    <name type="ordered locus">MT0076</name>
</gene>
<protein>
    <recommendedName>
        <fullName evidence="1">Serine hydroxymethyltransferase 2</fullName>
        <shortName>SHM2</shortName>
        <shortName evidence="1">SHMT 2</shortName>
        <shortName evidence="1">Serine methylase 2</shortName>
        <ecNumber evidence="1">2.1.2.1</ecNumber>
    </recommendedName>
</protein>
<proteinExistence type="inferred from homology"/>